<sequence>MGFGDFDTICQKAALPLCSLVGPASSISGATGIIPNCYARNIELANTIIFEGAASFVHIIALAMTVIMILHIRSKFTAVGRKEIITFFYIYMLLTMCSLVIDAGVVPPRSGPFPYFVAVQNGLTSALCTSLLVNGFVGFQLYEDGTALSVWLLRLTSTAMFAISFVISLLTFKSWGGLSPTNTVGMFVVLYILNAICIAVYLIMQLLLVMNTLEDRWPLGHIAFGLLVFICGQVLLYAFSDTICENVQHYLDGLFFTTICNLLAVMMVYKFWDYITKEDLEFSVGIKPNTWEVKEFLPEEDRRATVYQDTNSEYAGSMYHHRASAYNNHNY</sequence>
<dbReference type="EMBL" id="BA000050">
    <property type="protein sequence ID" value="BAE56875.1"/>
    <property type="molecule type" value="Genomic_DNA"/>
</dbReference>
<dbReference type="RefSeq" id="XP_001818877.1">
    <property type="nucleotide sequence ID" value="XM_001818825.2"/>
</dbReference>
<dbReference type="STRING" id="510516.Q2UNJ0"/>
<dbReference type="EnsemblFungi" id="BAE56875">
    <property type="protein sequence ID" value="BAE56875"/>
    <property type="gene ID" value="AO090001000344"/>
</dbReference>
<dbReference type="GeneID" id="5990848"/>
<dbReference type="KEGG" id="aor:AO090001000344"/>
<dbReference type="VEuPathDB" id="FungiDB:AO090001000344"/>
<dbReference type="HOGENOM" id="CLU_050424_1_1_1"/>
<dbReference type="OMA" id="TVWEVKD"/>
<dbReference type="OrthoDB" id="28817at5052"/>
<dbReference type="Proteomes" id="UP000006564">
    <property type="component" value="Chromosome 2"/>
</dbReference>
<dbReference type="GO" id="GO:0005789">
    <property type="term" value="C:endoplasmic reticulum membrane"/>
    <property type="evidence" value="ECO:0007669"/>
    <property type="project" value="UniProtKB-SubCell"/>
</dbReference>
<dbReference type="GO" id="GO:0051082">
    <property type="term" value="F:unfolded protein binding"/>
    <property type="evidence" value="ECO:0007669"/>
    <property type="project" value="TreeGrafter"/>
</dbReference>
<dbReference type="GO" id="GO:0071555">
    <property type="term" value="P:cell wall organization"/>
    <property type="evidence" value="ECO:0007669"/>
    <property type="project" value="UniProtKB-KW"/>
</dbReference>
<dbReference type="GO" id="GO:0006457">
    <property type="term" value="P:protein folding"/>
    <property type="evidence" value="ECO:0007669"/>
    <property type="project" value="TreeGrafter"/>
</dbReference>
<dbReference type="GO" id="GO:0015031">
    <property type="term" value="P:protein transport"/>
    <property type="evidence" value="ECO:0007669"/>
    <property type="project" value="UniProtKB-KW"/>
</dbReference>
<dbReference type="InterPro" id="IPR022057">
    <property type="entry name" value="Chs7"/>
</dbReference>
<dbReference type="PANTHER" id="PTHR35329">
    <property type="entry name" value="CHITIN SYNTHASE EXPORT CHAPERONE"/>
    <property type="match status" value="1"/>
</dbReference>
<dbReference type="PANTHER" id="PTHR35329:SF2">
    <property type="entry name" value="CHITIN SYNTHASE EXPORT CHAPERONE"/>
    <property type="match status" value="1"/>
</dbReference>
<dbReference type="Pfam" id="PF12271">
    <property type="entry name" value="Chs7"/>
    <property type="match status" value="1"/>
</dbReference>
<gene>
    <name type="primary">chs7</name>
    <name type="ORF">AO090001000344</name>
</gene>
<reference key="1">
    <citation type="journal article" date="2005" name="Nature">
        <title>Genome sequencing and analysis of Aspergillus oryzae.</title>
        <authorList>
            <person name="Machida M."/>
            <person name="Asai K."/>
            <person name="Sano M."/>
            <person name="Tanaka T."/>
            <person name="Kumagai T."/>
            <person name="Terai G."/>
            <person name="Kusumoto K."/>
            <person name="Arima T."/>
            <person name="Akita O."/>
            <person name="Kashiwagi Y."/>
            <person name="Abe K."/>
            <person name="Gomi K."/>
            <person name="Horiuchi H."/>
            <person name="Kitamoto K."/>
            <person name="Kobayashi T."/>
            <person name="Takeuchi M."/>
            <person name="Denning D.W."/>
            <person name="Galagan J.E."/>
            <person name="Nierman W.C."/>
            <person name="Yu J."/>
            <person name="Archer D.B."/>
            <person name="Bennett J.W."/>
            <person name="Bhatnagar D."/>
            <person name="Cleveland T.E."/>
            <person name="Fedorova N.D."/>
            <person name="Gotoh O."/>
            <person name="Horikawa H."/>
            <person name="Hosoyama A."/>
            <person name="Ichinomiya M."/>
            <person name="Igarashi R."/>
            <person name="Iwashita K."/>
            <person name="Juvvadi P.R."/>
            <person name="Kato M."/>
            <person name="Kato Y."/>
            <person name="Kin T."/>
            <person name="Kokubun A."/>
            <person name="Maeda H."/>
            <person name="Maeyama N."/>
            <person name="Maruyama J."/>
            <person name="Nagasaki H."/>
            <person name="Nakajima T."/>
            <person name="Oda K."/>
            <person name="Okada K."/>
            <person name="Paulsen I."/>
            <person name="Sakamoto K."/>
            <person name="Sawano T."/>
            <person name="Takahashi M."/>
            <person name="Takase K."/>
            <person name="Terabayashi Y."/>
            <person name="Wortman J.R."/>
            <person name="Yamada O."/>
            <person name="Yamagata Y."/>
            <person name="Anazawa H."/>
            <person name="Hata Y."/>
            <person name="Koide Y."/>
            <person name="Komori T."/>
            <person name="Koyama Y."/>
            <person name="Minetoki T."/>
            <person name="Suharnan S."/>
            <person name="Tanaka A."/>
            <person name="Isono K."/>
            <person name="Kuhara S."/>
            <person name="Ogasawara N."/>
            <person name="Kikuchi H."/>
        </authorList>
    </citation>
    <scope>NUCLEOTIDE SEQUENCE [LARGE SCALE GENOMIC DNA]</scope>
    <source>
        <strain>ATCC 42149 / RIB 40</strain>
    </source>
</reference>
<comment type="function">
    <text evidence="1">Chaperone required for the export of the chitin synthase chs3 from the endoplasmic reticulum.</text>
</comment>
<comment type="subunit">
    <text evidence="1">Interacts with chs3.</text>
</comment>
<comment type="subcellular location">
    <subcellularLocation>
        <location evidence="1">Endoplasmic reticulum membrane</location>
        <topology evidence="1">Multi-pass membrane protein</topology>
    </subcellularLocation>
</comment>
<comment type="similarity">
    <text evidence="3">Belongs to the CHS7 family.</text>
</comment>
<organism>
    <name type="scientific">Aspergillus oryzae (strain ATCC 42149 / RIB 40)</name>
    <name type="common">Yellow koji mold</name>
    <dbReference type="NCBI Taxonomy" id="510516"/>
    <lineage>
        <taxon>Eukaryota</taxon>
        <taxon>Fungi</taxon>
        <taxon>Dikarya</taxon>
        <taxon>Ascomycota</taxon>
        <taxon>Pezizomycotina</taxon>
        <taxon>Eurotiomycetes</taxon>
        <taxon>Eurotiomycetidae</taxon>
        <taxon>Eurotiales</taxon>
        <taxon>Aspergillaceae</taxon>
        <taxon>Aspergillus</taxon>
        <taxon>Aspergillus subgen. Circumdati</taxon>
    </lineage>
</organism>
<proteinExistence type="inferred from homology"/>
<protein>
    <recommendedName>
        <fullName>Chitin synthase export chaperone</fullName>
    </recommendedName>
</protein>
<keyword id="KW-0961">Cell wall biogenesis/degradation</keyword>
<keyword id="KW-0256">Endoplasmic reticulum</keyword>
<keyword id="KW-0472">Membrane</keyword>
<keyword id="KW-0653">Protein transport</keyword>
<keyword id="KW-1185">Reference proteome</keyword>
<keyword id="KW-0812">Transmembrane</keyword>
<keyword id="KW-1133">Transmembrane helix</keyword>
<keyword id="KW-0813">Transport</keyword>
<accession>Q2UNJ0</accession>
<feature type="chain" id="PRO_0000280570" description="Chitin synthase export chaperone">
    <location>
        <begin position="1"/>
        <end position="331"/>
    </location>
</feature>
<feature type="transmembrane region" description="Helical" evidence="2">
    <location>
        <begin position="52"/>
        <end position="72"/>
    </location>
</feature>
<feature type="transmembrane region" description="Helical" evidence="2">
    <location>
        <begin position="84"/>
        <end position="104"/>
    </location>
</feature>
<feature type="transmembrane region" description="Helical" evidence="2">
    <location>
        <begin position="122"/>
        <end position="142"/>
    </location>
</feature>
<feature type="transmembrane region" description="Helical" evidence="2">
    <location>
        <begin position="150"/>
        <end position="170"/>
    </location>
</feature>
<feature type="transmembrane region" description="Helical" evidence="2">
    <location>
        <begin position="184"/>
        <end position="204"/>
    </location>
</feature>
<feature type="transmembrane region" description="Helical" evidence="2">
    <location>
        <begin position="219"/>
        <end position="239"/>
    </location>
</feature>
<feature type="transmembrane region" description="Helical" evidence="2">
    <location>
        <begin position="249"/>
        <end position="269"/>
    </location>
</feature>
<name>CHS7_ASPOR</name>
<evidence type="ECO:0000250" key="1"/>
<evidence type="ECO:0000255" key="2"/>
<evidence type="ECO:0000305" key="3"/>